<reference key="1">
    <citation type="journal article" date="2003" name="Proc. Natl. Acad. Sci. U.S.A.">
        <title>The complete genome sequence of Mycobacterium bovis.</title>
        <authorList>
            <person name="Garnier T."/>
            <person name="Eiglmeier K."/>
            <person name="Camus J.-C."/>
            <person name="Medina N."/>
            <person name="Mansoor H."/>
            <person name="Pryor M."/>
            <person name="Duthoy S."/>
            <person name="Grondin S."/>
            <person name="Lacroix C."/>
            <person name="Monsempe C."/>
            <person name="Simon S."/>
            <person name="Harris B."/>
            <person name="Atkin R."/>
            <person name="Doggett J."/>
            <person name="Mayes R."/>
            <person name="Keating L."/>
            <person name="Wheeler P.R."/>
            <person name="Parkhill J."/>
            <person name="Barrell B.G."/>
            <person name="Cole S.T."/>
            <person name="Gordon S.V."/>
            <person name="Hewinson R.G."/>
        </authorList>
    </citation>
    <scope>NUCLEOTIDE SEQUENCE [LARGE SCALE GENOMIC DNA]</scope>
    <source>
        <strain>ATCC BAA-935 / AF2122/97</strain>
    </source>
</reference>
<reference key="2">
    <citation type="journal article" date="2017" name="Genome Announc.">
        <title>Updated reference genome sequence and annotation of Mycobacterium bovis AF2122/97.</title>
        <authorList>
            <person name="Malone K.M."/>
            <person name="Farrell D."/>
            <person name="Stuber T.P."/>
            <person name="Schubert O.T."/>
            <person name="Aebersold R."/>
            <person name="Robbe-Austerman S."/>
            <person name="Gordon S.V."/>
        </authorList>
    </citation>
    <scope>NUCLEOTIDE SEQUENCE [LARGE SCALE GENOMIC DNA]</scope>
    <scope>GENOME REANNOTATION</scope>
    <source>
        <strain>ATCC BAA-935 / AF2122/97</strain>
    </source>
</reference>
<keyword id="KW-0521">NADP</keyword>
<keyword id="KW-0560">Oxidoreductase</keyword>
<keyword id="KW-1185">Reference proteome</keyword>
<evidence type="ECO:0000250" key="1"/>
<evidence type="ECO:0000255" key="2">
    <source>
        <dbReference type="PROSITE-ProRule" id="PRU10007"/>
    </source>
</evidence>
<evidence type="ECO:0000305" key="3"/>
<comment type="function">
    <text evidence="1">Catalyzes the NADP(+)-dependent oxidation of succinate semialdehyde to succinate. Although it has succinate semialdehyde dehydrogenase activity, is likely to act physiologically on a different aldehyde(s) (By similarity).</text>
</comment>
<comment type="catalytic activity">
    <reaction>
        <text>succinate semialdehyde + NADP(+) + H2O = succinate + NADPH + 2 H(+)</text>
        <dbReference type="Rhea" id="RHEA:13213"/>
        <dbReference type="ChEBI" id="CHEBI:15377"/>
        <dbReference type="ChEBI" id="CHEBI:15378"/>
        <dbReference type="ChEBI" id="CHEBI:30031"/>
        <dbReference type="ChEBI" id="CHEBI:57706"/>
        <dbReference type="ChEBI" id="CHEBI:57783"/>
        <dbReference type="ChEBI" id="CHEBI:58349"/>
        <dbReference type="EC" id="1.2.1.79"/>
    </reaction>
</comment>
<comment type="similarity">
    <text evidence="3">Belongs to the aldehyde dehydrogenase family.</text>
</comment>
<name>GABD2_MYCBO</name>
<feature type="chain" id="PRO_0000310708" description="Putative succinate-semialdehyde dehydrogenase [NADP(+)] 2">
    <location>
        <begin position="1"/>
        <end position="518"/>
    </location>
</feature>
<feature type="active site" description="Proton acceptor" evidence="2">
    <location>
        <position position="254"/>
    </location>
</feature>
<feature type="active site" description="Nucleophile" evidence="2">
    <location>
        <position position="288"/>
    </location>
</feature>
<feature type="binding site" evidence="1">
    <location>
        <begin position="157"/>
        <end position="158"/>
    </location>
    <ligand>
        <name>NADP(+)</name>
        <dbReference type="ChEBI" id="CHEBI:58349"/>
    </ligand>
</feature>
<feature type="binding site" evidence="1">
    <location>
        <begin position="181"/>
        <end position="184"/>
    </location>
    <ligand>
        <name>NADP(+)</name>
        <dbReference type="ChEBI" id="CHEBI:58349"/>
    </ligand>
</feature>
<feature type="binding site" evidence="1">
    <location>
        <begin position="232"/>
        <end position="233"/>
    </location>
    <ligand>
        <name>NADP(+)</name>
        <dbReference type="ChEBI" id="CHEBI:58349"/>
    </ligand>
</feature>
<feature type="binding site" evidence="1">
    <location>
        <position position="255"/>
    </location>
    <ligand>
        <name>NADP(+)</name>
        <dbReference type="ChEBI" id="CHEBI:58349"/>
    </ligand>
</feature>
<feature type="binding site" evidence="1">
    <location>
        <position position="386"/>
    </location>
    <ligand>
        <name>NADP(+)</name>
        <dbReference type="ChEBI" id="CHEBI:58349"/>
    </ligand>
</feature>
<sequence>MPAPSAEVFDRLRNLAAIKDVAARPTRTIDEVFTGKPLTTIPVGTAADVEAAFAEARAAQTDWAKRPVIERAAVIRRYRDLVIENREFLMDLLQAEAGKARWAAQEEIVDLIANANYYARVCVDLLKPRKAQPLLPGIGKTTVCYQPKGVVGVISPWNYPMTLTVSDSVPALVAGNAVVLKPDSQTPYCALACAELLYRAGLPRALYAIVPGPGSVVGTAITDNCDYLMFTGSSATGSRLAEHAGRRLIGFSAELGGKNPMIVARGANLDKVAKAATRACFSNAGQLCISIERIYVEKDIAEEFTRKFGDAVRNMKLGTAYDFSVDMGSLISEAQLKTVSGHVDDATAKGAKVIAGGKARPDIGPLFYEPTVLTNVAPEMECAANETFGPVVSIYPVADVDEAVEKANDTDYGLNASVWAGSTAEGQRIAARLRSGTVNVDEGYAFAWGSLSAPMGGMGLSGVGRRHGPEGLLKYTESQTIATARVFNLDPPFGIPATVWQKSLLPIVRTVMKLPGRR</sequence>
<organism>
    <name type="scientific">Mycobacterium bovis (strain ATCC BAA-935 / AF2122/97)</name>
    <dbReference type="NCBI Taxonomy" id="233413"/>
    <lineage>
        <taxon>Bacteria</taxon>
        <taxon>Bacillati</taxon>
        <taxon>Actinomycetota</taxon>
        <taxon>Actinomycetes</taxon>
        <taxon>Mycobacteriales</taxon>
        <taxon>Mycobacteriaceae</taxon>
        <taxon>Mycobacterium</taxon>
        <taxon>Mycobacterium tuberculosis complex</taxon>
    </lineage>
</organism>
<accession>Q7TZP3</accession>
<accession>A0A1R3Y1A6</accession>
<accession>X2BIY8</accession>
<dbReference type="EC" id="1.2.1.79"/>
<dbReference type="EMBL" id="LT708304">
    <property type="protein sequence ID" value="SIU00363.1"/>
    <property type="molecule type" value="Genomic_DNA"/>
</dbReference>
<dbReference type="RefSeq" id="NP_855412.1">
    <property type="nucleotide sequence ID" value="NC_002945.3"/>
</dbReference>
<dbReference type="RefSeq" id="WP_003898989.1">
    <property type="nucleotide sequence ID" value="NC_002945.4"/>
</dbReference>
<dbReference type="SMR" id="Q7TZP3"/>
<dbReference type="KEGG" id="mbo:BQ2027_MB1760"/>
<dbReference type="PATRIC" id="fig|233413.5.peg.1921"/>
<dbReference type="Proteomes" id="UP000001419">
    <property type="component" value="Chromosome"/>
</dbReference>
<dbReference type="GO" id="GO:0036243">
    <property type="term" value="F:succinate-semialdehyde dehydrogenase (NADP+) activity"/>
    <property type="evidence" value="ECO:0007669"/>
    <property type="project" value="UniProtKB-EC"/>
</dbReference>
<dbReference type="CDD" id="cd07101">
    <property type="entry name" value="ALDH_SSADH2_GabD2"/>
    <property type="match status" value="1"/>
</dbReference>
<dbReference type="FunFam" id="3.40.309.10:FF:000009">
    <property type="entry name" value="Aldehyde dehydrogenase A"/>
    <property type="match status" value="1"/>
</dbReference>
<dbReference type="FunFam" id="3.40.605.10:FF:000010">
    <property type="entry name" value="N-succinylglutamate 5-semialdehyde dehydrogenase"/>
    <property type="match status" value="1"/>
</dbReference>
<dbReference type="Gene3D" id="3.40.605.10">
    <property type="entry name" value="Aldehyde Dehydrogenase, Chain A, domain 1"/>
    <property type="match status" value="1"/>
</dbReference>
<dbReference type="Gene3D" id="3.40.309.10">
    <property type="entry name" value="Aldehyde Dehydrogenase, Chain A, domain 2"/>
    <property type="match status" value="1"/>
</dbReference>
<dbReference type="InterPro" id="IPR016161">
    <property type="entry name" value="Ald_DH/histidinol_DH"/>
</dbReference>
<dbReference type="InterPro" id="IPR016163">
    <property type="entry name" value="Ald_DH_C"/>
</dbReference>
<dbReference type="InterPro" id="IPR029510">
    <property type="entry name" value="Ald_DH_CS_GLU"/>
</dbReference>
<dbReference type="InterPro" id="IPR016162">
    <property type="entry name" value="Ald_DH_N"/>
</dbReference>
<dbReference type="InterPro" id="IPR015590">
    <property type="entry name" value="Aldehyde_DH_dom"/>
</dbReference>
<dbReference type="NCBIfam" id="NF006916">
    <property type="entry name" value="PRK09407.1"/>
    <property type="match status" value="1"/>
</dbReference>
<dbReference type="PANTHER" id="PTHR11699">
    <property type="entry name" value="ALDEHYDE DEHYDROGENASE-RELATED"/>
    <property type="match status" value="1"/>
</dbReference>
<dbReference type="Pfam" id="PF00171">
    <property type="entry name" value="Aldedh"/>
    <property type="match status" value="1"/>
</dbReference>
<dbReference type="SUPFAM" id="SSF53720">
    <property type="entry name" value="ALDH-like"/>
    <property type="match status" value="1"/>
</dbReference>
<dbReference type="PROSITE" id="PS00687">
    <property type="entry name" value="ALDEHYDE_DEHYDR_GLU"/>
    <property type="match status" value="1"/>
</dbReference>
<gene>
    <name type="primary">gabD2</name>
    <name type="ordered locus">BQ2027_MB1760</name>
</gene>
<proteinExistence type="inferred from homology"/>
<protein>
    <recommendedName>
        <fullName>Putative succinate-semialdehyde dehydrogenase [NADP(+)] 2</fullName>
        <shortName>SSADH 2</shortName>
        <shortName>SSDH 2</shortName>
        <ecNumber>1.2.1.79</ecNumber>
    </recommendedName>
</protein>